<name>GCH1L_MYCLE</name>
<accession>O69481</accession>
<feature type="chain" id="PRO_0000147317" description="GTP cyclohydrolase 1 type 2 homolog">
    <location>
        <begin position="1"/>
        <end position="385"/>
    </location>
</feature>
<feature type="binding site" evidence="1">
    <location>
        <position position="64"/>
    </location>
    <ligand>
        <name>a divalent metal cation</name>
        <dbReference type="ChEBI" id="CHEBI:60240"/>
        <label>1</label>
    </ligand>
</feature>
<feature type="binding site" evidence="1">
    <location>
        <position position="65"/>
    </location>
    <ligand>
        <name>a divalent metal cation</name>
        <dbReference type="ChEBI" id="CHEBI:60240"/>
        <label>2</label>
    </ligand>
</feature>
<feature type="binding site" evidence="1">
    <location>
        <position position="103"/>
    </location>
    <ligand>
        <name>a divalent metal cation</name>
        <dbReference type="ChEBI" id="CHEBI:60240"/>
        <label>1</label>
    </ligand>
</feature>
<feature type="binding site" evidence="1">
    <location>
        <position position="333"/>
    </location>
    <ligand>
        <name>a divalent metal cation</name>
        <dbReference type="ChEBI" id="CHEBI:60240"/>
        <label>2</label>
    </ligand>
</feature>
<feature type="binding site" evidence="1">
    <location>
        <position position="337"/>
    </location>
    <ligand>
        <name>a divalent metal cation</name>
        <dbReference type="ChEBI" id="CHEBI:60240"/>
        <label>1</label>
    </ligand>
</feature>
<feature type="binding site" evidence="1">
    <location>
        <position position="337"/>
    </location>
    <ligand>
        <name>a divalent metal cation</name>
        <dbReference type="ChEBI" id="CHEBI:60240"/>
        <label>2</label>
    </ligand>
</feature>
<protein>
    <recommendedName>
        <fullName>GTP cyclohydrolase 1 type 2 homolog</fullName>
    </recommendedName>
</protein>
<gene>
    <name type="ordered locus">ML1639</name>
    <name type="ORF">MLCB1243.36</name>
</gene>
<comment type="subunit">
    <text evidence="1">Homohexamer.</text>
</comment>
<comment type="similarity">
    <text evidence="2">Belongs to the GTP cyclohydrolase I type 2/NIF3 family.</text>
</comment>
<proteinExistence type="inferred from homology"/>
<evidence type="ECO:0000250" key="1">
    <source>
        <dbReference type="UniProtKB" id="P0AFP6"/>
    </source>
</evidence>
<evidence type="ECO:0000305" key="2"/>
<sequence>MSARLADVIEVLDHAYPPRFAQSWDSVGLVCGDPEDVLEAITIAVDATPAVIDEVPDSGLLLVHHPLLLHGVDTVAVSTPKGALVHRLIRSGRSLFTAHTNADSASPGVSDALAHVFGLTVDAVLEPLLGVASLDKWVIYVPLEHVAAVQAAVFEAGAGHIGDYSHCSWSVTGTGQFMPHDGASPVVGSIGAIERVAEDRVEVVAPARARAAVLSAMHAAHPYEEPAFDIFALVPPPGDVGLGRIGTLPRPESLSAFVARVGAALPQTSSGVRATGDPDMLVSRVAVCGGAGDSLLSLAAVADVQAYVTADLRHHPADEHRRASNVALIDVAHWASEFPWCGQAADVLRSHFGTALSVRVCTIRTDPWNLGARRVNDVSDSGRDQ</sequence>
<keyword id="KW-0479">Metal-binding</keyword>
<keyword id="KW-1185">Reference proteome</keyword>
<reference key="1">
    <citation type="journal article" date="2001" name="Nature">
        <title>Massive gene decay in the leprosy bacillus.</title>
        <authorList>
            <person name="Cole S.T."/>
            <person name="Eiglmeier K."/>
            <person name="Parkhill J."/>
            <person name="James K.D."/>
            <person name="Thomson N.R."/>
            <person name="Wheeler P.R."/>
            <person name="Honore N."/>
            <person name="Garnier T."/>
            <person name="Churcher C.M."/>
            <person name="Harris D.E."/>
            <person name="Mungall K.L."/>
            <person name="Basham D."/>
            <person name="Brown D."/>
            <person name="Chillingworth T."/>
            <person name="Connor R."/>
            <person name="Davies R.M."/>
            <person name="Devlin K."/>
            <person name="Duthoy S."/>
            <person name="Feltwell T."/>
            <person name="Fraser A."/>
            <person name="Hamlin N."/>
            <person name="Holroyd S."/>
            <person name="Hornsby T."/>
            <person name="Jagels K."/>
            <person name="Lacroix C."/>
            <person name="Maclean J."/>
            <person name="Moule S."/>
            <person name="Murphy L.D."/>
            <person name="Oliver K."/>
            <person name="Quail M.A."/>
            <person name="Rajandream M.A."/>
            <person name="Rutherford K.M."/>
            <person name="Rutter S."/>
            <person name="Seeger K."/>
            <person name="Simon S."/>
            <person name="Simmonds M."/>
            <person name="Skelton J."/>
            <person name="Squares R."/>
            <person name="Squares S."/>
            <person name="Stevens K."/>
            <person name="Taylor K."/>
            <person name="Whitehead S."/>
            <person name="Woodward J.R."/>
            <person name="Barrell B.G."/>
        </authorList>
    </citation>
    <scope>NUCLEOTIDE SEQUENCE [LARGE SCALE GENOMIC DNA]</scope>
    <source>
        <strain>TN</strain>
    </source>
</reference>
<dbReference type="EMBL" id="AL023635">
    <property type="protein sequence ID" value="CAA19217.1"/>
    <property type="molecule type" value="Genomic_DNA"/>
</dbReference>
<dbReference type="EMBL" id="AL583922">
    <property type="protein sequence ID" value="CAC30590.1"/>
    <property type="molecule type" value="Genomic_DNA"/>
</dbReference>
<dbReference type="PIR" id="T44719">
    <property type="entry name" value="T44719"/>
</dbReference>
<dbReference type="RefSeq" id="NP_302129.1">
    <property type="nucleotide sequence ID" value="NC_002677.1"/>
</dbReference>
<dbReference type="RefSeq" id="WP_010908450.1">
    <property type="nucleotide sequence ID" value="NC_002677.1"/>
</dbReference>
<dbReference type="SMR" id="O69481"/>
<dbReference type="STRING" id="272631.gene:17575481"/>
<dbReference type="KEGG" id="mle:ML1639"/>
<dbReference type="PATRIC" id="fig|272631.5.peg.3093"/>
<dbReference type="Leproma" id="ML1639"/>
<dbReference type="eggNOG" id="COG0327">
    <property type="taxonomic scope" value="Bacteria"/>
</dbReference>
<dbReference type="eggNOG" id="COG3323">
    <property type="taxonomic scope" value="Bacteria"/>
</dbReference>
<dbReference type="HOGENOM" id="CLU_037423_1_1_11"/>
<dbReference type="OrthoDB" id="9795763at2"/>
<dbReference type="Proteomes" id="UP000000806">
    <property type="component" value="Chromosome"/>
</dbReference>
<dbReference type="GO" id="GO:0005737">
    <property type="term" value="C:cytoplasm"/>
    <property type="evidence" value="ECO:0007669"/>
    <property type="project" value="TreeGrafter"/>
</dbReference>
<dbReference type="GO" id="GO:0046872">
    <property type="term" value="F:metal ion binding"/>
    <property type="evidence" value="ECO:0007669"/>
    <property type="project" value="UniProtKB-KW"/>
</dbReference>
<dbReference type="FunFam" id="3.40.1390.30:FF:000001">
    <property type="entry name" value="GTP cyclohydrolase 1 type 2"/>
    <property type="match status" value="1"/>
</dbReference>
<dbReference type="FunFam" id="3.30.70.120:FF:000006">
    <property type="entry name" value="GTP cyclohydrolase 1 type 2 homolog"/>
    <property type="match status" value="1"/>
</dbReference>
<dbReference type="Gene3D" id="3.30.70.120">
    <property type="match status" value="1"/>
</dbReference>
<dbReference type="Gene3D" id="3.40.1390.30">
    <property type="entry name" value="NIF3 (NGG1p interacting factor 3)-like"/>
    <property type="match status" value="1"/>
</dbReference>
<dbReference type="InterPro" id="IPR002678">
    <property type="entry name" value="DUF34/NIF3"/>
</dbReference>
<dbReference type="InterPro" id="IPR017221">
    <property type="entry name" value="DUF34/NIF3_bac"/>
</dbReference>
<dbReference type="InterPro" id="IPR036069">
    <property type="entry name" value="DUF34/NIF3_sf"/>
</dbReference>
<dbReference type="InterPro" id="IPR015867">
    <property type="entry name" value="N-reg_PII/ATP_PRibTrfase_C"/>
</dbReference>
<dbReference type="PANTHER" id="PTHR13799:SF14">
    <property type="entry name" value="GTP CYCLOHYDROLASE 1 TYPE 2 HOMOLOG"/>
    <property type="match status" value="1"/>
</dbReference>
<dbReference type="PANTHER" id="PTHR13799">
    <property type="entry name" value="NGG1 INTERACTING FACTOR 3"/>
    <property type="match status" value="1"/>
</dbReference>
<dbReference type="Pfam" id="PF01784">
    <property type="entry name" value="DUF34_NIF3"/>
    <property type="match status" value="1"/>
</dbReference>
<dbReference type="PIRSF" id="PIRSF037489">
    <property type="entry name" value="UCP037489_NIF3_YqfO"/>
    <property type="match status" value="1"/>
</dbReference>
<dbReference type="SUPFAM" id="SSF102705">
    <property type="entry name" value="NIF3 (NGG1p interacting factor 3)-like"/>
    <property type="match status" value="1"/>
</dbReference>
<organism>
    <name type="scientific">Mycobacterium leprae (strain TN)</name>
    <dbReference type="NCBI Taxonomy" id="272631"/>
    <lineage>
        <taxon>Bacteria</taxon>
        <taxon>Bacillati</taxon>
        <taxon>Actinomycetota</taxon>
        <taxon>Actinomycetes</taxon>
        <taxon>Mycobacteriales</taxon>
        <taxon>Mycobacteriaceae</taxon>
        <taxon>Mycobacterium</taxon>
    </lineage>
</organism>